<proteinExistence type="inferred from homology"/>
<feature type="chain" id="PRO_0000447029" description="Glycosyltransferase GlyF">
    <location>
        <begin position="1"/>
        <end position="398"/>
    </location>
</feature>
<feature type="region of interest" description="GT8 domain" evidence="7">
    <location>
        <begin position="1"/>
        <end position="259"/>
    </location>
</feature>
<feature type="binding site" evidence="1">
    <location>
        <begin position="8"/>
        <end position="13"/>
    </location>
    <ligand>
        <name>UDP</name>
        <dbReference type="ChEBI" id="CHEBI:58223"/>
    </ligand>
</feature>
<feature type="binding site" evidence="1">
    <location>
        <begin position="101"/>
        <end position="102"/>
    </location>
    <ligand>
        <name>UDP</name>
        <dbReference type="ChEBI" id="CHEBI:58223"/>
    </ligand>
</feature>
<feature type="binding site" evidence="1">
    <location>
        <position position="101"/>
    </location>
    <ligand>
        <name>Mn(2+)</name>
        <dbReference type="ChEBI" id="CHEBI:29035"/>
    </ligand>
</feature>
<feature type="binding site" evidence="1">
    <location>
        <position position="103"/>
    </location>
    <ligand>
        <name>Mn(2+)</name>
        <dbReference type="ChEBI" id="CHEBI:29035"/>
    </ligand>
</feature>
<feature type="binding site" evidence="1">
    <location>
        <begin position="221"/>
        <end position="227"/>
    </location>
    <ligand>
        <name>UDP</name>
        <dbReference type="ChEBI" id="CHEBI:58223"/>
    </ligand>
</feature>
<feature type="binding site" evidence="1">
    <location>
        <position position="221"/>
    </location>
    <ligand>
        <name>Mn(2+)</name>
        <dbReference type="ChEBI" id="CHEBI:29035"/>
    </ligand>
</feature>
<gene>
    <name evidence="5" type="primary">glyF</name>
    <name type="ordered locus">SP_1765</name>
</gene>
<evidence type="ECO:0000250" key="1">
    <source>
        <dbReference type="UniProtKB" id="A0A0H2URJ6"/>
    </source>
</evidence>
<evidence type="ECO:0000269" key="2">
    <source>
    </source>
</evidence>
<evidence type="ECO:0000303" key="3">
    <source>
    </source>
</evidence>
<evidence type="ECO:0000303" key="4">
    <source>
    </source>
</evidence>
<evidence type="ECO:0000303" key="5">
    <source>
    </source>
</evidence>
<evidence type="ECO:0000305" key="6"/>
<evidence type="ECO:0000305" key="7">
    <source>
    </source>
</evidence>
<comment type="function">
    <text evidence="2">May be involved in the polymorphic O-glycosylation of the serine-rich repeat protein PsrP. Has hydrolytic activity against UDP-galactose and to a lesser extent against UDP-glucose; no glycosyltransferase activity has been seen with tested substrates.</text>
</comment>
<comment type="miscellaneous">
    <text evidence="3 4 6">Encoded in RD10, a pathogenicity island with an atypical GC content that is associated with invasive pneumococcal disease. Pathogenicity islands account for greater than half the genomic diversity observed between isolates (PubMed:11463916, PubMed:16861665). The main function of this island seems to be correct synthesis and export of pneumococcal serine-rich repeat protein PsrP (Probable).</text>
</comment>
<comment type="similarity">
    <text evidence="6">In the N-terminal section; belongs to the glycosyltransferase 8 family.</text>
</comment>
<sequence>MRKSIVLAADNAYLIPLETTIKSVLYHNRDVDFYILNSDIAPEWFKLLGRKMEVVNSTIRSVHIDKELFESYKTGPHINYASYFRFFATEVVESDRVLYLDSDIIVTGELATLFEIDLKGYSIGAVDDVYAYEGRKSGFNTGMLLMDVAKWKEHSIVNSLLELAAEQNQVVHLGDQSILNIYFEDNWLALDKTYNYMVGIDIYHLAQECERLDDNPPTIVHYASHDKPWNTYSISRLRELWWVYRDLDWSEIAFQRSDLNYFERSNQSKKQVMLVTWSADIKHLEYLVQRLPDWHFHLAAPCDCSEELTSLSQYTNVTVYQNVLHSRIDWLLDDSIVYLDINTGGEVFNVVTRAQESGKKIFAFDITRKSMDDGLYDGIFSVERPDDLVDRMKNIEIE</sequence>
<name>GLYF_STRPN</name>
<reference key="1">
    <citation type="journal article" date="2001" name="Science">
        <title>Complete genome sequence of a virulent isolate of Streptococcus pneumoniae.</title>
        <authorList>
            <person name="Tettelin H."/>
            <person name="Nelson K.E."/>
            <person name="Paulsen I.T."/>
            <person name="Eisen J.A."/>
            <person name="Read T.D."/>
            <person name="Peterson S.N."/>
            <person name="Heidelberg J.F."/>
            <person name="DeBoy R.T."/>
            <person name="Haft D.H."/>
            <person name="Dodson R.J."/>
            <person name="Durkin A.S."/>
            <person name="Gwinn M.L."/>
            <person name="Kolonay J.F."/>
            <person name="Nelson W.C."/>
            <person name="Peterson J.D."/>
            <person name="Umayam L.A."/>
            <person name="White O."/>
            <person name="Salzberg S.L."/>
            <person name="Lewis M.R."/>
            <person name="Radune D."/>
            <person name="Holtzapple E.K."/>
            <person name="Khouri H.M."/>
            <person name="Wolf A.M."/>
            <person name="Utterback T.R."/>
            <person name="Hansen C.L."/>
            <person name="McDonald L.A."/>
            <person name="Feldblyum T.V."/>
            <person name="Angiuoli S.V."/>
            <person name="Dickinson T."/>
            <person name="Hickey E.K."/>
            <person name="Holt I.E."/>
            <person name="Loftus B.J."/>
            <person name="Yang F."/>
            <person name="Smith H.O."/>
            <person name="Venter J.C."/>
            <person name="Dougherty B.A."/>
            <person name="Morrison D.A."/>
            <person name="Hollingshead S.K."/>
            <person name="Fraser C.M."/>
        </authorList>
    </citation>
    <scope>NUCLEOTIDE SEQUENCE [LARGE SCALE GENOMIC DNA]</scope>
    <source>
        <strain>ATCC BAA-334 / TIGR4</strain>
    </source>
</reference>
<reference key="2">
    <citation type="journal article" date="2006" name="Infect. Immun.">
        <title>Identification of a candidate Streptococcus pneumoniae core genome and regions of diversity correlated with invasive pneumococcal disease.</title>
        <authorList>
            <person name="Obert C."/>
            <person name="Sublett J."/>
            <person name="Kaushal D."/>
            <person name="Hinojosa E."/>
            <person name="Barton T."/>
            <person name="Tuomanen E.I."/>
            <person name="Orihuela C.J."/>
        </authorList>
    </citation>
    <scope>DISCUSSION OF SEQUENCE</scope>
    <source>
        <strain>ATCC BAA-334 / TIGR4</strain>
    </source>
</reference>
<reference key="3">
    <citation type="journal article" date="2017" name="J. Biol. Chem.">
        <title>Defining the enzymatic pathway for polymorphic O-glycosylation of the pneumococcal serine-rich repeat protein PsrP.</title>
        <authorList>
            <person name="Jiang Y.L."/>
            <person name="Jin H."/>
            <person name="Yang H.B."/>
            <person name="Zhao R.L."/>
            <person name="Wang S."/>
            <person name="Chen Y."/>
            <person name="Zhou C.Z."/>
        </authorList>
    </citation>
    <scope>FUNCTION</scope>
    <scope>DOMAIN</scope>
    <source>
        <strain>ATCC BAA-334 / TIGR4</strain>
    </source>
</reference>
<organism>
    <name type="scientific">Streptococcus pneumoniae serotype 4 (strain ATCC BAA-334 / TIGR4)</name>
    <dbReference type="NCBI Taxonomy" id="170187"/>
    <lineage>
        <taxon>Bacteria</taxon>
        <taxon>Bacillati</taxon>
        <taxon>Bacillota</taxon>
        <taxon>Bacilli</taxon>
        <taxon>Lactobacillales</taxon>
        <taxon>Streptococcaceae</taxon>
        <taxon>Streptococcus</taxon>
    </lineage>
</organism>
<keyword id="KW-0328">Glycosyltransferase</keyword>
<keyword id="KW-0464">Manganese</keyword>
<keyword id="KW-0479">Metal-binding</keyword>
<keyword id="KW-0547">Nucleotide-binding</keyword>
<keyword id="KW-1185">Reference proteome</keyword>
<keyword id="KW-0808">Transferase</keyword>
<dbReference type="EMBL" id="AE005672">
    <property type="protein sequence ID" value="AAK75840.1"/>
    <property type="molecule type" value="Genomic_DNA"/>
</dbReference>
<dbReference type="RefSeq" id="WP_001232150.1">
    <property type="nucleotide sequence ID" value="NZ_CP155539.1"/>
</dbReference>
<dbReference type="SMR" id="A0A0H2URH2"/>
<dbReference type="PaxDb" id="170187-SP_1765"/>
<dbReference type="EnsemblBacteria" id="AAK75840">
    <property type="protein sequence ID" value="AAK75840"/>
    <property type="gene ID" value="SP_1765"/>
</dbReference>
<dbReference type="KEGG" id="spn:SP_1765"/>
<dbReference type="eggNOG" id="COG1442">
    <property type="taxonomic scope" value="Bacteria"/>
</dbReference>
<dbReference type="PhylomeDB" id="A0A0H2URH2"/>
<dbReference type="BioCyc" id="SPNE170187:G1FZB-1790-MONOMER"/>
<dbReference type="Proteomes" id="UP000000585">
    <property type="component" value="Chromosome"/>
</dbReference>
<dbReference type="GO" id="GO:0016757">
    <property type="term" value="F:glycosyltransferase activity"/>
    <property type="evidence" value="ECO:0007669"/>
    <property type="project" value="UniProtKB-KW"/>
</dbReference>
<dbReference type="GO" id="GO:0046872">
    <property type="term" value="F:metal ion binding"/>
    <property type="evidence" value="ECO:0007669"/>
    <property type="project" value="UniProtKB-KW"/>
</dbReference>
<dbReference type="GO" id="GO:0000166">
    <property type="term" value="F:nucleotide binding"/>
    <property type="evidence" value="ECO:0007669"/>
    <property type="project" value="UniProtKB-KW"/>
</dbReference>
<dbReference type="CDD" id="cd04194">
    <property type="entry name" value="GT8_A4GalT_like"/>
    <property type="match status" value="1"/>
</dbReference>
<dbReference type="Gene3D" id="3.90.550.10">
    <property type="entry name" value="Spore Coat Polysaccharide Biosynthesis Protein SpsA, Chain A"/>
    <property type="match status" value="1"/>
</dbReference>
<dbReference type="InterPro" id="IPR002495">
    <property type="entry name" value="Glyco_trans_8"/>
</dbReference>
<dbReference type="InterPro" id="IPR050748">
    <property type="entry name" value="Glycosyltrans_8_dom-fam"/>
</dbReference>
<dbReference type="InterPro" id="IPR029044">
    <property type="entry name" value="Nucleotide-diphossugar_trans"/>
</dbReference>
<dbReference type="PANTHER" id="PTHR13778">
    <property type="entry name" value="GLYCOSYLTRANSFERASE 8 DOMAIN-CONTAINING PROTEIN"/>
    <property type="match status" value="1"/>
</dbReference>
<dbReference type="PANTHER" id="PTHR13778:SF47">
    <property type="entry name" value="LIPOPOLYSACCHARIDE 1,3-GALACTOSYLTRANSFERASE"/>
    <property type="match status" value="1"/>
</dbReference>
<dbReference type="Pfam" id="PF01501">
    <property type="entry name" value="Glyco_transf_8"/>
    <property type="match status" value="1"/>
</dbReference>
<dbReference type="SUPFAM" id="SSF53448">
    <property type="entry name" value="Nucleotide-diphospho-sugar transferases"/>
    <property type="match status" value="1"/>
</dbReference>
<protein>
    <recommendedName>
        <fullName evidence="5">Glycosyltransferase GlyF</fullName>
    </recommendedName>
    <alternativeName>
        <fullName evidence="6">Putative PsrP glycosyltransferase GlyF</fullName>
    </alternativeName>
</protein>
<accession>A0A0H2URH2</accession>